<protein>
    <recommendedName>
        <fullName>DNA replication and repair protein RecF</fullName>
    </recommendedName>
</protein>
<evidence type="ECO:0000250" key="1"/>
<evidence type="ECO:0000255" key="2"/>
<evidence type="ECO:0000305" key="3"/>
<dbReference type="EMBL" id="X89367">
    <property type="protein sequence ID" value="CAA61549.1"/>
    <property type="molecule type" value="Genomic_DNA"/>
</dbReference>
<dbReference type="EMBL" id="AE005176">
    <property type="protein sequence ID" value="AAK06073.1"/>
    <property type="molecule type" value="Genomic_DNA"/>
</dbReference>
<dbReference type="PIR" id="G86871">
    <property type="entry name" value="G86871"/>
</dbReference>
<dbReference type="PIR" id="JC4753">
    <property type="entry name" value="JC4753"/>
</dbReference>
<dbReference type="RefSeq" id="NP_268132.1">
    <property type="nucleotide sequence ID" value="NC_002662.1"/>
</dbReference>
<dbReference type="RefSeq" id="WP_010906242.1">
    <property type="nucleotide sequence ID" value="NC_002662.1"/>
</dbReference>
<dbReference type="SMR" id="Q9CE70"/>
<dbReference type="PaxDb" id="272623-L0261"/>
<dbReference type="EnsemblBacteria" id="AAK06073">
    <property type="protein sequence ID" value="AAK06073"/>
    <property type="gene ID" value="L0261"/>
</dbReference>
<dbReference type="KEGG" id="lla:L0261"/>
<dbReference type="PATRIC" id="fig|272623.7.peg.2127"/>
<dbReference type="eggNOG" id="COG1195">
    <property type="taxonomic scope" value="Bacteria"/>
</dbReference>
<dbReference type="HOGENOM" id="CLU_040267_0_1_9"/>
<dbReference type="OrthoDB" id="9803889at2"/>
<dbReference type="Proteomes" id="UP000002196">
    <property type="component" value="Chromosome"/>
</dbReference>
<dbReference type="GO" id="GO:0005737">
    <property type="term" value="C:cytoplasm"/>
    <property type="evidence" value="ECO:0007669"/>
    <property type="project" value="UniProtKB-SubCell"/>
</dbReference>
<dbReference type="GO" id="GO:0005524">
    <property type="term" value="F:ATP binding"/>
    <property type="evidence" value="ECO:0007669"/>
    <property type="project" value="UniProtKB-UniRule"/>
</dbReference>
<dbReference type="GO" id="GO:0003697">
    <property type="term" value="F:single-stranded DNA binding"/>
    <property type="evidence" value="ECO:0007669"/>
    <property type="project" value="UniProtKB-UniRule"/>
</dbReference>
<dbReference type="GO" id="GO:0006260">
    <property type="term" value="P:DNA replication"/>
    <property type="evidence" value="ECO:0007669"/>
    <property type="project" value="UniProtKB-UniRule"/>
</dbReference>
<dbReference type="GO" id="GO:0000731">
    <property type="term" value="P:DNA synthesis involved in DNA repair"/>
    <property type="evidence" value="ECO:0007669"/>
    <property type="project" value="TreeGrafter"/>
</dbReference>
<dbReference type="GO" id="GO:0006302">
    <property type="term" value="P:double-strand break repair"/>
    <property type="evidence" value="ECO:0007669"/>
    <property type="project" value="TreeGrafter"/>
</dbReference>
<dbReference type="GO" id="GO:0009432">
    <property type="term" value="P:SOS response"/>
    <property type="evidence" value="ECO:0007669"/>
    <property type="project" value="UniProtKB-UniRule"/>
</dbReference>
<dbReference type="CDD" id="cd03242">
    <property type="entry name" value="ABC_RecF"/>
    <property type="match status" value="1"/>
</dbReference>
<dbReference type="Gene3D" id="3.40.50.300">
    <property type="entry name" value="P-loop containing nucleotide triphosphate hydrolases"/>
    <property type="match status" value="1"/>
</dbReference>
<dbReference type="Gene3D" id="1.20.1050.90">
    <property type="entry name" value="RecF/RecN/SMC, N-terminal domain"/>
    <property type="match status" value="1"/>
</dbReference>
<dbReference type="HAMAP" id="MF_00365">
    <property type="entry name" value="RecF"/>
    <property type="match status" value="1"/>
</dbReference>
<dbReference type="InterPro" id="IPR001238">
    <property type="entry name" value="DNA-binding_RecF"/>
</dbReference>
<dbReference type="InterPro" id="IPR018078">
    <property type="entry name" value="DNA-binding_RecF_CS"/>
</dbReference>
<dbReference type="InterPro" id="IPR027417">
    <property type="entry name" value="P-loop_NTPase"/>
</dbReference>
<dbReference type="InterPro" id="IPR003395">
    <property type="entry name" value="RecF/RecN/SMC_N"/>
</dbReference>
<dbReference type="InterPro" id="IPR042174">
    <property type="entry name" value="RecF_2"/>
</dbReference>
<dbReference type="NCBIfam" id="TIGR00611">
    <property type="entry name" value="recf"/>
    <property type="match status" value="1"/>
</dbReference>
<dbReference type="PANTHER" id="PTHR32182">
    <property type="entry name" value="DNA REPLICATION AND REPAIR PROTEIN RECF"/>
    <property type="match status" value="1"/>
</dbReference>
<dbReference type="PANTHER" id="PTHR32182:SF0">
    <property type="entry name" value="DNA REPLICATION AND REPAIR PROTEIN RECF"/>
    <property type="match status" value="1"/>
</dbReference>
<dbReference type="Pfam" id="PF02463">
    <property type="entry name" value="SMC_N"/>
    <property type="match status" value="1"/>
</dbReference>
<dbReference type="SUPFAM" id="SSF52540">
    <property type="entry name" value="P-loop containing nucleoside triphosphate hydrolases"/>
    <property type="match status" value="1"/>
</dbReference>
<dbReference type="PROSITE" id="PS00617">
    <property type="entry name" value="RECF_1"/>
    <property type="match status" value="1"/>
</dbReference>
<dbReference type="PROSITE" id="PS00618">
    <property type="entry name" value="RECF_2"/>
    <property type="match status" value="1"/>
</dbReference>
<gene>
    <name type="primary">recF</name>
    <name type="ordered locus">LL1975</name>
    <name type="ORF">L0261</name>
</gene>
<sequence>MKLKAIELKNFRNYEELKLDFHPNLNIFLGQNAQGKTNILEAIHFLALTRSHRTSHDKELISWSQQEMKVSGVVEKAHATVPLEVQLSPKGRIAKANHLKENRLADYIGQLKILMFAPENLELVKGSPATRRKFMDIELGQIHAVYLYDSMRYNRALKERNAYLKFDKDKIDKNFLSVLDGQLAEHGNKIMLERQNFIDKLEVHAKKIHEQLTHGKENLKIIYNQNVKTDFSKELLSRQDHDIFRHQTSVGPHRDDLQFFINEINVADFGSQGQQRTVALSIKLAEIDLIFEETGEYPILLLDDVMSELDNHRQLDLIETSLGKTQTFITTTTLDHLKNLPENLSIFHVNAGTIEQEQ</sequence>
<organism>
    <name type="scientific">Lactococcus lactis subsp. lactis (strain IL1403)</name>
    <name type="common">Streptococcus lactis</name>
    <dbReference type="NCBI Taxonomy" id="272623"/>
    <lineage>
        <taxon>Bacteria</taxon>
        <taxon>Bacillati</taxon>
        <taxon>Bacillota</taxon>
        <taxon>Bacilli</taxon>
        <taxon>Lactobacillales</taxon>
        <taxon>Streptococcaceae</taxon>
        <taxon>Lactococcus</taxon>
    </lineage>
</organism>
<accession>Q9CE70</accession>
<accession>P50925</accession>
<name>RECF_LACLA</name>
<comment type="function">
    <text evidence="1">The RecF protein is involved in DNA metabolism; it is required for DNA replication and normal SOS inducibility. RecF binds preferentially to single-stranded, linear DNA. It also seems to bind ATP (By similarity).</text>
</comment>
<comment type="subcellular location">
    <subcellularLocation>
        <location evidence="1">Cytoplasm</location>
    </subcellularLocation>
</comment>
<comment type="similarity">
    <text evidence="3">Belongs to the RecF family.</text>
</comment>
<proteinExistence type="inferred from homology"/>
<feature type="chain" id="PRO_0000196422" description="DNA replication and repair protein RecF">
    <location>
        <begin position="1"/>
        <end position="358"/>
    </location>
</feature>
<feature type="binding site" evidence="2">
    <location>
        <begin position="30"/>
        <end position="37"/>
    </location>
    <ligand>
        <name>ATP</name>
        <dbReference type="ChEBI" id="CHEBI:30616"/>
    </ligand>
</feature>
<feature type="sequence variant" description="In strain: ATCC 7962.">
    <original>V</original>
    <variation>G</variation>
    <location>
        <position position="74"/>
    </location>
</feature>
<feature type="sequence variant" description="In strain: ATCC 7962.">
    <original>V</original>
    <variation>I</variation>
    <location>
        <position position="81"/>
    </location>
</feature>
<feature type="sequence variant" description="In strain: ATCC 7962.">
    <original>F</original>
    <variation>L</variation>
    <location>
        <position position="291"/>
    </location>
</feature>
<keyword id="KW-0067">ATP-binding</keyword>
<keyword id="KW-0963">Cytoplasm</keyword>
<keyword id="KW-0227">DNA damage</keyword>
<keyword id="KW-0234">DNA repair</keyword>
<keyword id="KW-0235">DNA replication</keyword>
<keyword id="KW-0238">DNA-binding</keyword>
<keyword id="KW-0547">Nucleotide-binding</keyword>
<keyword id="KW-1185">Reference proteome</keyword>
<keyword id="KW-0742">SOS response</keyword>
<reference key="1">
    <citation type="journal article" date="1996" name="Gene">
        <title>Sequence of a Lactococcus lactis DNA fragment homologous to the recF gene of Bacillus subtilis.</title>
        <authorList>
            <person name="MacCormick C.A."/>
            <person name="Griffin H.G."/>
            <person name="Gasson M.J."/>
        </authorList>
    </citation>
    <scope>NUCLEOTIDE SEQUENCE [GENOMIC DNA]</scope>
    <source>
        <strain>ATCC 7962</strain>
    </source>
</reference>
<reference key="2">
    <citation type="journal article" date="2001" name="Genome Res.">
        <title>The complete genome sequence of the lactic acid bacterium Lactococcus lactis ssp. lactis IL1403.</title>
        <authorList>
            <person name="Bolotin A."/>
            <person name="Wincker P."/>
            <person name="Mauger S."/>
            <person name="Jaillon O."/>
            <person name="Malarme K."/>
            <person name="Weissenbach J."/>
            <person name="Ehrlich S.D."/>
            <person name="Sorokin A."/>
        </authorList>
    </citation>
    <scope>NUCLEOTIDE SEQUENCE [LARGE SCALE GENOMIC DNA]</scope>
    <source>
        <strain>IL1403</strain>
    </source>
</reference>